<accession>Q64478</accession>
<accession>A2RTP6</accession>
<accession>Q3TYR6</accession>
<protein>
    <recommendedName>
        <fullName>Histone H2B type 1-H</fullName>
    </recommendedName>
    <alternativeName>
        <fullName evidence="20">H2B-clustered histone 9</fullName>
    </alternativeName>
    <alternativeName>
        <fullName>h2B-221</fullName>
    </alternativeName>
</protein>
<organism>
    <name type="scientific">Mus musculus</name>
    <name type="common">Mouse</name>
    <dbReference type="NCBI Taxonomy" id="10090"/>
    <lineage>
        <taxon>Eukaryota</taxon>
        <taxon>Metazoa</taxon>
        <taxon>Chordata</taxon>
        <taxon>Craniata</taxon>
        <taxon>Vertebrata</taxon>
        <taxon>Euteleostomi</taxon>
        <taxon>Mammalia</taxon>
        <taxon>Eutheria</taxon>
        <taxon>Euarchontoglires</taxon>
        <taxon>Glires</taxon>
        <taxon>Rodentia</taxon>
        <taxon>Myomorpha</taxon>
        <taxon>Muroidea</taxon>
        <taxon>Muridae</taxon>
        <taxon>Murinae</taxon>
        <taxon>Mus</taxon>
        <taxon>Mus</taxon>
    </lineage>
</organism>
<keyword id="KW-0007">Acetylation</keyword>
<keyword id="KW-0013">ADP-ribosylation</keyword>
<keyword id="KW-0158">Chromosome</keyword>
<keyword id="KW-0238">DNA-binding</keyword>
<keyword id="KW-0325">Glycoprotein</keyword>
<keyword id="KW-0379">Hydroxylation</keyword>
<keyword id="KW-1017">Isopeptide bond</keyword>
<keyword id="KW-0488">Methylation</keyword>
<keyword id="KW-0544">Nucleosome core</keyword>
<keyword id="KW-0539">Nucleus</keyword>
<keyword id="KW-0597">Phosphoprotein</keyword>
<keyword id="KW-1185">Reference proteome</keyword>
<keyword id="KW-0832">Ubl conjugation</keyword>
<comment type="function">
    <text>Core component of nucleosome. Nucleosomes wrap and compact DNA into chromatin, limiting DNA accessibility to the cellular machineries which require DNA as a template. Histones thereby play a central role in transcription regulation, DNA repair, DNA replication and chromosomal stability. DNA accessibility is regulated via a complex set of post-translational modifications of histones, also called histone code, and nucleosome remodeling.</text>
</comment>
<comment type="subunit">
    <text>The nucleosome is a histone octamer containing two molecules each of H2A, H2B, H3 and H4 assembled in one H3-H4 heterotetramer and two H2A-H2B heterodimers. The octamer wraps approximately 147 bp of DNA.</text>
</comment>
<comment type="subcellular location">
    <subcellularLocation>
        <location>Nucleus</location>
    </subcellularLocation>
    <subcellularLocation>
        <location>Chromosome</location>
    </subcellularLocation>
</comment>
<comment type="PTM">
    <text evidence="2">Monoubiquitination at Lys-35 (H2BK34Ub) by the MSL1/MSL2 dimer is required for histone H3 'Lys-4' (H3K4me) and 'Lys-79' (H3K79me) methylation and transcription activation at specific gene loci, such as HOXA9 and MEIS1 loci. Similarly, monoubiquitination at Lys-121 (H2BK120Ub) by the RNF20/40 complex gives a specific tag for epigenetic transcriptional activation and is also prerequisite for histone H3 'Lys-4' and 'Lys-79' methylation. It also functions cooperatively with the FACT dimer to stimulate elongation by RNA polymerase II. H2BK120Ub also acts as a regulator of mRNA splicing: deubiquitination by USP49 is required for efficient cotranscriptional splicing of a large set of exons (By similarity).</text>
</comment>
<comment type="PTM">
    <text evidence="10 11 12 18">Phosphorylated on Ser-15 (H2BS14ph) by STK4/MST1 during apoptosis; which facilitates apoptotic chromatin condensation (PubMed:15197225, PubMed:16039583). Also phosphorylated on Ser-15 in response to DNA double strand breaks (DSBs), and in correlation with somatic hypermutation and immunoglobulin class-switch recombination (PubMed:15197225). Phosphorylation at Ser-37 (H2BS36ph) by AMPK in response to stress promotes transcription (PubMed:20647423, PubMed:32822587).</text>
</comment>
<comment type="PTM">
    <text evidence="4">GlcNAcylation at Ser-113 promotes monoubiquitination of Lys-121. It fluctuates in response to extracellular glucose, and associates with transcribed genes (By similarity).</text>
</comment>
<comment type="PTM">
    <text evidence="2 18">ADP-ribosylated by PARP1 or PARP2 on Ser-7 (H2BS6ADPr) in response to DNA damage (By similarity). H2BS6ADPr promotes recruitment of CHD1L (By similarity). Mono-ADP-ribosylated on Glu-3 (H2BE2ADPr) by PARP3 in response to single-strand breaks (By similarity). Poly ADP-ribosylation on Glu-36 (H2BE35ADPr) by PARP1 regulates adipogenesis: it inhibits phosphorylation at Ser-37 (H2BS36ph), thereby blocking expression of pro-adipogenetic genes (PubMed:32822587).</text>
</comment>
<comment type="PTM">
    <text evidence="13">Crotonylation (Kcr) is specifically present in male germ cells and marks testis-specific genes in post-meiotic cells, including X-linked genes that escape sex chromosome inactivation in haploid cells. Crotonylation marks active promoters and enhancers and confers resistance to transcriptional repressors. It is also associated with post-meiotically activated genes on autosomes.</text>
</comment>
<comment type="PTM">
    <text evidence="16">Hydroxybutyrylation of histones is induced by starvation.</text>
</comment>
<comment type="PTM">
    <text evidence="2">Lactylated in macrophages by EP300/P300 by using lactoyl-CoA directly derived from endogenous or exogenous lactate, leading to stimulates gene transcription.</text>
</comment>
<comment type="similarity">
    <text evidence="19">Belongs to the histone H2B family.</text>
</comment>
<sequence length="126" mass="13920">MPEPAKSAPAPKKGSKKALTKAQKKDGKKRKRSRKESYSVYVYKVLKQVHPDTGISSKAMGIMNSFVNDIFERIAGEASRLAHYNKRSTITSREIQTAVRLLLPGELAKHAVSEGTKAVTKYTSSK</sequence>
<gene>
    <name evidence="20" type="primary">H2bc9</name>
    <name evidence="20" type="synonym">Hist1h2bh</name>
</gene>
<feature type="initiator methionine" description="Removed" evidence="1">
    <location>
        <position position="1"/>
    </location>
</feature>
<feature type="chain" id="PRO_0000244832" description="Histone H2B type 1-H">
    <location>
        <begin position="2"/>
        <end position="126"/>
    </location>
</feature>
<feature type="region of interest" description="Disordered" evidence="9">
    <location>
        <begin position="1"/>
        <end position="36"/>
    </location>
</feature>
<feature type="compositionally biased region" description="Low complexity" evidence="9">
    <location>
        <begin position="1"/>
        <end position="12"/>
    </location>
</feature>
<feature type="modified residue" description="N-acetylproline" evidence="1">
    <location>
        <position position="2"/>
    </location>
</feature>
<feature type="modified residue" description="ADP-ribosyl glutamic acid" evidence="2">
    <location>
        <position position="3"/>
    </location>
</feature>
<feature type="modified residue" description="N6-(2-hydroxyisobutyryl)lysine; alternate" evidence="15">
    <location>
        <position position="6"/>
    </location>
</feature>
<feature type="modified residue" description="N6-(beta-hydroxybutyryl)lysine; alternate" evidence="16">
    <location>
        <position position="6"/>
    </location>
</feature>
<feature type="modified residue" description="N6-acetyllysine; alternate" evidence="7">
    <location>
        <position position="6"/>
    </location>
</feature>
<feature type="modified residue" description="N6-butyryllysine; alternate" evidence="2">
    <location>
        <position position="6"/>
    </location>
</feature>
<feature type="modified residue" description="N6-crotonyllysine; alternate" evidence="13">
    <location>
        <position position="6"/>
    </location>
</feature>
<feature type="modified residue" description="N6-lactoyllysine; alternate" evidence="17">
    <location>
        <position position="6"/>
    </location>
</feature>
<feature type="modified residue" description="ADP-ribosylserine" evidence="2">
    <location>
        <position position="7"/>
    </location>
</feature>
<feature type="modified residue" description="N6-(beta-hydroxybutyryl)lysine; alternate" evidence="16">
    <location>
        <position position="12"/>
    </location>
</feature>
<feature type="modified residue" description="N6-acetyllysine; alternate" evidence="7">
    <location>
        <position position="12"/>
    </location>
</feature>
<feature type="modified residue" description="N6-crotonyllysine; alternate" evidence="13">
    <location>
        <position position="12"/>
    </location>
</feature>
<feature type="modified residue" description="N6-lactoyllysine; alternate" evidence="17">
    <location>
        <position position="12"/>
    </location>
</feature>
<feature type="modified residue" description="N6-(2-hydroxyisobutyryl)lysine; alternate" evidence="15">
    <location>
        <position position="13"/>
    </location>
</feature>
<feature type="modified residue" description="N6-acetyllysine; alternate" evidence="7">
    <location>
        <position position="13"/>
    </location>
</feature>
<feature type="modified residue" description="N6-crotonyllysine; alternate" evidence="13">
    <location>
        <position position="13"/>
    </location>
</feature>
<feature type="modified residue" description="Phosphoserine; by STK4/MST1" evidence="10 11">
    <location>
        <position position="15"/>
    </location>
</feature>
<feature type="modified residue" description="N6-acetyllysine; alternate" evidence="7">
    <location>
        <position position="16"/>
    </location>
</feature>
<feature type="modified residue" description="N6-crotonyllysine; alternate" evidence="13">
    <location>
        <position position="16"/>
    </location>
</feature>
<feature type="modified residue" description="N6-lactoyllysine; alternate" evidence="17">
    <location>
        <position position="16"/>
    </location>
</feature>
<feature type="modified residue" description="N6-acetyllysine; alternate" evidence="7">
    <location>
        <position position="17"/>
    </location>
</feature>
<feature type="modified residue" description="N6-crotonyllysine; alternate" evidence="13">
    <location>
        <position position="17"/>
    </location>
</feature>
<feature type="modified residue" description="N6-glutaryllysine; alternate" evidence="2">
    <location>
        <position position="17"/>
    </location>
</feature>
<feature type="modified residue" description="N6-lactoyllysine; alternate" evidence="17">
    <location>
        <position position="17"/>
    </location>
</feature>
<feature type="modified residue" description="N6-(2-hydroxyisobutyryl)lysine; alternate" evidence="15">
    <location>
        <position position="21"/>
    </location>
</feature>
<feature type="modified residue" description="N6-(beta-hydroxybutyryl)lysine; alternate" evidence="16">
    <location>
        <position position="21"/>
    </location>
</feature>
<feature type="modified residue" description="N6-acetyllysine; alternate" evidence="7">
    <location>
        <position position="21"/>
    </location>
</feature>
<feature type="modified residue" description="N6-butyryllysine; alternate" evidence="2">
    <location>
        <position position="21"/>
    </location>
</feature>
<feature type="modified residue" description="N6-crotonyllysine; alternate" evidence="13">
    <location>
        <position position="21"/>
    </location>
</feature>
<feature type="modified residue" description="N6-lactoyllysine; alternate" evidence="17">
    <location>
        <position position="21"/>
    </location>
</feature>
<feature type="modified residue" description="N6-(2-hydroxyisobutyryl)lysine; alternate" evidence="15">
    <location>
        <position position="24"/>
    </location>
</feature>
<feature type="modified residue" description="N6-acetyllysine; alternate" evidence="2">
    <location>
        <position position="24"/>
    </location>
</feature>
<feature type="modified residue" description="N6-crotonyllysine; alternate" evidence="13">
    <location>
        <position position="24"/>
    </location>
</feature>
<feature type="modified residue" description="N6-lactoyllysine; alternate" evidence="2">
    <location>
        <position position="24"/>
    </location>
</feature>
<feature type="modified residue" description="N6-(2-hydroxyisobutyryl)lysine" evidence="15">
    <location>
        <position position="25"/>
    </location>
</feature>
<feature type="modified residue" description="N6-(2-hydroxyisobutyryl)lysine; alternate" evidence="15">
    <location>
        <position position="35"/>
    </location>
</feature>
<feature type="modified residue" description="N6-(beta-hydroxybutyryl)lysine; alternate" evidence="16">
    <location>
        <position position="35"/>
    </location>
</feature>
<feature type="modified residue" description="N6-crotonyllysine; alternate" evidence="13">
    <location>
        <position position="35"/>
    </location>
</feature>
<feature type="modified residue" description="N6-glutaryllysine; alternate" evidence="2">
    <location>
        <position position="35"/>
    </location>
</feature>
<feature type="modified residue" description="N6-succinyllysine; alternate" evidence="7">
    <location>
        <position position="35"/>
    </location>
</feature>
<feature type="modified residue" description="PolyADP-ribosyl glutamic acid" evidence="18">
    <location>
        <position position="36"/>
    </location>
</feature>
<feature type="modified residue" description="Phosphoserine; by AMPK" evidence="12 18">
    <location>
        <position position="37"/>
    </location>
</feature>
<feature type="modified residue" description="N6-(2-hydroxyisobutyryl)lysine; alternate" evidence="15">
    <location>
        <position position="44"/>
    </location>
</feature>
<feature type="modified residue" description="N6-glutaryllysine; alternate" evidence="2">
    <location>
        <position position="44"/>
    </location>
</feature>
<feature type="modified residue" description="N6-lactoyllysine; alternate" evidence="2">
    <location>
        <position position="44"/>
    </location>
</feature>
<feature type="modified residue" description="N6-(2-hydroxyisobutyryl)lysine; alternate" evidence="15">
    <location>
        <position position="47"/>
    </location>
</feature>
<feature type="modified residue" description="N6-glutaryllysine; alternate" evidence="2">
    <location>
        <position position="47"/>
    </location>
</feature>
<feature type="modified residue" description="N6-methyllysine; alternate" evidence="7">
    <location>
        <position position="47"/>
    </location>
</feature>
<feature type="modified residue" description="N6,N6-dimethyllysine; alternate" evidence="7">
    <location>
        <position position="58"/>
    </location>
</feature>
<feature type="modified residue" description="N6-(2-hydroxyisobutyryl)lysine; alternate" evidence="15">
    <location>
        <position position="58"/>
    </location>
</feature>
<feature type="modified residue" description="Dimethylated arginine" evidence="8">
    <location>
        <position position="80"/>
    </location>
</feature>
<feature type="modified residue" description="N6,N6,N6-trimethyllysine; alternate" evidence="8">
    <location>
        <position position="86"/>
    </location>
</feature>
<feature type="modified residue" description="N6-(2-hydroxyisobutyryl)lysine; alternate" evidence="15">
    <location>
        <position position="86"/>
    </location>
</feature>
<feature type="modified residue" description="N6-acetyllysine; alternate" evidence="8">
    <location>
        <position position="86"/>
    </location>
</feature>
<feature type="modified residue" description="N6-lactoyllysine; alternate" evidence="17">
    <location>
        <position position="86"/>
    </location>
</feature>
<feature type="modified residue" description="Omega-N-methylarginine" evidence="8">
    <location>
        <position position="87"/>
    </location>
</feature>
<feature type="modified residue" description="Omega-N-methylarginine" evidence="8">
    <location>
        <position position="93"/>
    </location>
</feature>
<feature type="modified residue" description="N6-(2-hydroxyisobutyryl)lysine; alternate" evidence="15">
    <location>
        <position position="109"/>
    </location>
</feature>
<feature type="modified residue" description="N6-(beta-hydroxybutyryl)lysine; alternate" evidence="16">
    <location>
        <position position="109"/>
    </location>
</feature>
<feature type="modified residue" description="N6-glutaryllysine; alternate" evidence="2">
    <location>
        <position position="109"/>
    </location>
</feature>
<feature type="modified residue" description="N6-lactoyllysine; alternate" evidence="17">
    <location>
        <position position="109"/>
    </location>
</feature>
<feature type="modified residue" description="N6-methyllysine; alternate" evidence="7">
    <location>
        <position position="109"/>
    </location>
</feature>
<feature type="modified residue" description="Phosphothreonine" evidence="5">
    <location>
        <position position="116"/>
    </location>
</feature>
<feature type="modified residue" description="N6-(2-hydroxyisobutyryl)lysine; alternate" evidence="15">
    <location>
        <position position="117"/>
    </location>
</feature>
<feature type="modified residue" description="N6-(beta-hydroxybutyryl)lysine; alternate" evidence="16">
    <location>
        <position position="117"/>
    </location>
</feature>
<feature type="modified residue" description="N6-glutaryllysine; alternate" evidence="2">
    <location>
        <position position="117"/>
    </location>
</feature>
<feature type="modified residue" description="N6-lactoyllysine; alternate" evidence="17">
    <location>
        <position position="117"/>
    </location>
</feature>
<feature type="modified residue" description="N6-methylated lysine; alternate" evidence="5">
    <location>
        <position position="117"/>
    </location>
</feature>
<feature type="modified residue" description="N6-succinyllysine; alternate" evidence="7">
    <location>
        <position position="117"/>
    </location>
</feature>
<feature type="modified residue" description="N6-(2-hydroxyisobutyryl)lysine; alternate" evidence="15">
    <location>
        <position position="121"/>
    </location>
</feature>
<feature type="modified residue" description="N6-glutaryllysine; alternate" evidence="2">
    <location>
        <position position="121"/>
    </location>
</feature>
<feature type="modified residue" description="N6-lactoyllysine; alternate" evidence="2">
    <location>
        <position position="121"/>
    </location>
</feature>
<feature type="modified residue" description="N6-succinyllysine; alternate" evidence="14">
    <location>
        <position position="121"/>
    </location>
</feature>
<feature type="glycosylation site" description="O-linked (GlcNAc) serine" evidence="4">
    <location>
        <position position="113"/>
    </location>
</feature>
<feature type="cross-link" description="Glycyl lysine isopeptide (Lys-Gly) (interchain with G-Cter in SUMO2); alternate" evidence="3">
    <location>
        <position position="6"/>
    </location>
</feature>
<feature type="cross-link" description="Glycyl lysine isopeptide (Lys-Gly) (interchain with G-Cter in SUMO2); alternate" evidence="6">
    <location>
        <position position="21"/>
    </location>
</feature>
<feature type="cross-link" description="Glycyl lysine isopeptide (Lys-Gly) (interchain with G-Cter in ubiquitin); alternate" evidence="7">
    <location>
        <position position="35"/>
    </location>
</feature>
<feature type="cross-link" description="Glycyl lysine isopeptide (Lys-Gly) (interchain with G-Cter in ubiquitin); alternate" evidence="7">
    <location>
        <position position="121"/>
    </location>
</feature>
<feature type="sequence conflict" description="In Ref. 3; BAE34496." evidence="19" ref="3">
    <original>K</original>
    <variation>R</variation>
    <location>
        <position position="58"/>
    </location>
</feature>
<dbReference type="EMBL" id="X02621">
    <property type="protein sequence ID" value="CAA26475.1"/>
    <property type="molecule type" value="Genomic_DNA"/>
</dbReference>
<dbReference type="EMBL" id="AY158933">
    <property type="protein sequence ID" value="AAO06243.1"/>
    <property type="molecule type" value="Genomic_DNA"/>
</dbReference>
<dbReference type="EMBL" id="AK158416">
    <property type="protein sequence ID" value="BAE34496.1"/>
    <property type="molecule type" value="mRNA"/>
</dbReference>
<dbReference type="EMBL" id="BC092138">
    <property type="protein sequence ID" value="AAH92138.1"/>
    <property type="molecule type" value="mRNA"/>
</dbReference>
<dbReference type="EMBL" id="BC132584">
    <property type="protein sequence ID" value="AAI32585.1"/>
    <property type="molecule type" value="mRNA"/>
</dbReference>
<dbReference type="EMBL" id="BC132586">
    <property type="protein sequence ID" value="AAI32587.1"/>
    <property type="molecule type" value="mRNA"/>
</dbReference>
<dbReference type="CCDS" id="CCDS26343.1"/>
<dbReference type="PIR" id="I48401">
    <property type="entry name" value="I48401"/>
</dbReference>
<dbReference type="RefSeq" id="NP_835504.1">
    <property type="nucleotide sequence ID" value="NM_178197.2"/>
</dbReference>
<dbReference type="SMR" id="Q64478"/>
<dbReference type="BioGRID" id="235101">
    <property type="interactions" value="3"/>
</dbReference>
<dbReference type="FunCoup" id="Q64478">
    <property type="interactions" value="1250"/>
</dbReference>
<dbReference type="IntAct" id="Q64478">
    <property type="interactions" value="1"/>
</dbReference>
<dbReference type="STRING" id="10090.ENSMUSP00000153277"/>
<dbReference type="GlyCosmos" id="Q64478">
    <property type="glycosylation" value="1 site, No reported glycans"/>
</dbReference>
<dbReference type="GlyGen" id="Q64478">
    <property type="glycosylation" value="2 sites, 1 O-linked glycan (1 site)"/>
</dbReference>
<dbReference type="iPTMnet" id="Q64478"/>
<dbReference type="PhosphoSitePlus" id="Q64478"/>
<dbReference type="SwissPalm" id="Q64478"/>
<dbReference type="jPOST" id="Q64478"/>
<dbReference type="PaxDb" id="10090-ENSMUSP00000077290"/>
<dbReference type="PeptideAtlas" id="Q64478"/>
<dbReference type="Pumba" id="Q64478"/>
<dbReference type="TopDownProteomics" id="Q64478"/>
<dbReference type="DNASU" id="319182"/>
<dbReference type="Ensembl" id="ENSMUST00000224359.2">
    <property type="protein sequence ID" value="ENSMUSP00000153277.2"/>
    <property type="gene ID" value="ENSMUSG00000114456.2"/>
</dbReference>
<dbReference type="GeneID" id="319182"/>
<dbReference type="KEGG" id="mmu:319182"/>
<dbReference type="UCSC" id="uc007pty.2">
    <property type="organism name" value="mouse"/>
</dbReference>
<dbReference type="AGR" id="MGI:2448387"/>
<dbReference type="CTD" id="8345"/>
<dbReference type="MGI" id="MGI:2448387">
    <property type="gene designation" value="H2bc9"/>
</dbReference>
<dbReference type="VEuPathDB" id="HostDB:ENSMUSG00000114456"/>
<dbReference type="eggNOG" id="KOG1744">
    <property type="taxonomic scope" value="Eukaryota"/>
</dbReference>
<dbReference type="GeneTree" id="ENSGT01110000267152"/>
<dbReference type="HOGENOM" id="CLU_075666_2_1_1"/>
<dbReference type="InParanoid" id="Q64478"/>
<dbReference type="OMA" id="AQLCQTT"/>
<dbReference type="OrthoDB" id="9625659at2759"/>
<dbReference type="PhylomeDB" id="Q64478"/>
<dbReference type="TreeFam" id="TF300212"/>
<dbReference type="Reactome" id="R-MMU-110330">
    <property type="pathway name" value="Recognition and association of DNA glycosylase with site containing an affected purine"/>
</dbReference>
<dbReference type="Reactome" id="R-MMU-110331">
    <property type="pathway name" value="Cleavage of the damaged purine"/>
</dbReference>
<dbReference type="Reactome" id="R-MMU-212300">
    <property type="pathway name" value="PRC2 methylates histones and DNA"/>
</dbReference>
<dbReference type="Reactome" id="R-MMU-2299718">
    <property type="pathway name" value="Condensation of Prophase Chromosomes"/>
</dbReference>
<dbReference type="Reactome" id="R-MMU-2559586">
    <property type="pathway name" value="DNA Damage/Telomere Stress Induced Senescence"/>
</dbReference>
<dbReference type="Reactome" id="R-MMU-3214815">
    <property type="pathway name" value="HDACs deacetylate histones"/>
</dbReference>
<dbReference type="Reactome" id="R-MMU-3214847">
    <property type="pathway name" value="HATs acetylate histones"/>
</dbReference>
<dbReference type="Reactome" id="R-MMU-5693565">
    <property type="pathway name" value="Recruitment and ATM-mediated phosphorylation of repair and signaling proteins at DNA double strand breaks"/>
</dbReference>
<dbReference type="Reactome" id="R-MMU-5693571">
    <property type="pathway name" value="Nonhomologous End-Joining (NHEJ)"/>
</dbReference>
<dbReference type="Reactome" id="R-MMU-5693607">
    <property type="pathway name" value="Processing of DNA double-strand break ends"/>
</dbReference>
<dbReference type="Reactome" id="R-MMU-606279">
    <property type="pathway name" value="Deposition of new CENPA-containing nucleosomes at the centromere"/>
</dbReference>
<dbReference type="Reactome" id="R-MMU-69473">
    <property type="pathway name" value="G2/M DNA damage checkpoint"/>
</dbReference>
<dbReference type="Reactome" id="R-MMU-8866654">
    <property type="pathway name" value="E3 ubiquitin ligases ubiquitinate target proteins"/>
</dbReference>
<dbReference type="Reactome" id="R-MMU-8936459">
    <property type="pathway name" value="RUNX1 regulates genes involved in megakaryocyte differentiation and platelet function"/>
</dbReference>
<dbReference type="Reactome" id="R-MMU-9018519">
    <property type="pathway name" value="Estrogen-dependent gene expression"/>
</dbReference>
<dbReference type="Reactome" id="R-MMU-9670095">
    <property type="pathway name" value="Inhibition of DNA recombination at telomere"/>
</dbReference>
<dbReference type="Reactome" id="R-MMU-9841922">
    <property type="pathway name" value="MLL4 and MLL3 complexes regulate expression of PPARG target genes in adipogenesis and hepatic steatosis"/>
</dbReference>
<dbReference type="Reactome" id="R-MMU-9843940">
    <property type="pathway name" value="Regulation of endogenous retroelements by KRAB-ZFP proteins"/>
</dbReference>
<dbReference type="BioGRID-ORCS" id="319182">
    <property type="hits" value="12 hits in 44 CRISPR screens"/>
</dbReference>
<dbReference type="PRO" id="PR:Q64478"/>
<dbReference type="Proteomes" id="UP000000589">
    <property type="component" value="Chromosome 13"/>
</dbReference>
<dbReference type="RNAct" id="Q64478">
    <property type="molecule type" value="protein"/>
</dbReference>
<dbReference type="Bgee" id="ENSMUSG00000114456">
    <property type="expression patterns" value="Expressed in uterus and 51 other cell types or tissues"/>
</dbReference>
<dbReference type="GO" id="GO:0005654">
    <property type="term" value="C:nucleoplasm"/>
    <property type="evidence" value="ECO:0000304"/>
    <property type="project" value="Reactome"/>
</dbReference>
<dbReference type="GO" id="GO:0000786">
    <property type="term" value="C:nucleosome"/>
    <property type="evidence" value="ECO:0007669"/>
    <property type="project" value="UniProtKB-KW"/>
</dbReference>
<dbReference type="GO" id="GO:0003677">
    <property type="term" value="F:DNA binding"/>
    <property type="evidence" value="ECO:0007669"/>
    <property type="project" value="UniProtKB-KW"/>
</dbReference>
<dbReference type="GO" id="GO:0046982">
    <property type="term" value="F:protein heterodimerization activity"/>
    <property type="evidence" value="ECO:0007669"/>
    <property type="project" value="InterPro"/>
</dbReference>
<dbReference type="GO" id="GO:0030527">
    <property type="term" value="F:structural constituent of chromatin"/>
    <property type="evidence" value="ECO:0007669"/>
    <property type="project" value="InterPro"/>
</dbReference>
<dbReference type="CDD" id="cd22910">
    <property type="entry name" value="HFD_H2B"/>
    <property type="match status" value="1"/>
</dbReference>
<dbReference type="FunFam" id="1.10.20.10:FF:000003">
    <property type="entry name" value="Histone H2B"/>
    <property type="match status" value="1"/>
</dbReference>
<dbReference type="Gene3D" id="1.10.20.10">
    <property type="entry name" value="Histone, subunit A"/>
    <property type="match status" value="1"/>
</dbReference>
<dbReference type="InterPro" id="IPR009072">
    <property type="entry name" value="Histone-fold"/>
</dbReference>
<dbReference type="InterPro" id="IPR007125">
    <property type="entry name" value="Histone_H2A/H2B/H3"/>
</dbReference>
<dbReference type="InterPro" id="IPR000558">
    <property type="entry name" value="Histone_H2B"/>
</dbReference>
<dbReference type="InterPro" id="IPR055333">
    <property type="entry name" value="HISTONE_H2B_site"/>
</dbReference>
<dbReference type="PANTHER" id="PTHR23428">
    <property type="entry name" value="HISTONE H2B"/>
    <property type="match status" value="1"/>
</dbReference>
<dbReference type="Pfam" id="PF00125">
    <property type="entry name" value="Histone"/>
    <property type="match status" value="1"/>
</dbReference>
<dbReference type="PRINTS" id="PR00621">
    <property type="entry name" value="HISTONEH2B"/>
</dbReference>
<dbReference type="SMART" id="SM00427">
    <property type="entry name" value="H2B"/>
    <property type="match status" value="1"/>
</dbReference>
<dbReference type="SUPFAM" id="SSF47113">
    <property type="entry name" value="Histone-fold"/>
    <property type="match status" value="1"/>
</dbReference>
<dbReference type="PROSITE" id="PS00357">
    <property type="entry name" value="HISTONE_H2B"/>
    <property type="match status" value="1"/>
</dbReference>
<reference key="1">
    <citation type="journal article" date="1983" name="Nucleic Acids Res.">
        <title>Structure of a cluster of mouse histone genes.</title>
        <authorList>
            <person name="Sittman D.B."/>
            <person name="Graves R.A."/>
            <person name="Marzluff W.F."/>
        </authorList>
    </citation>
    <scope>NUCLEOTIDE SEQUENCE [GENOMIC DNA]</scope>
</reference>
<reference key="2">
    <citation type="journal article" date="2002" name="Genomics">
        <title>The human and mouse replication-dependent histone genes.</title>
        <authorList>
            <person name="Marzluff W.F."/>
            <person name="Gongidi P."/>
            <person name="Woods K.R."/>
            <person name="Jin J."/>
            <person name="Maltais L.J."/>
        </authorList>
    </citation>
    <scope>NUCLEOTIDE SEQUENCE [GENOMIC DNA]</scope>
</reference>
<reference key="3">
    <citation type="journal article" date="2005" name="Science">
        <title>The transcriptional landscape of the mammalian genome.</title>
        <authorList>
            <person name="Carninci P."/>
            <person name="Kasukawa T."/>
            <person name="Katayama S."/>
            <person name="Gough J."/>
            <person name="Frith M.C."/>
            <person name="Maeda N."/>
            <person name="Oyama R."/>
            <person name="Ravasi T."/>
            <person name="Lenhard B."/>
            <person name="Wells C."/>
            <person name="Kodzius R."/>
            <person name="Shimokawa K."/>
            <person name="Bajic V.B."/>
            <person name="Brenner S.E."/>
            <person name="Batalov S."/>
            <person name="Forrest A.R."/>
            <person name="Zavolan M."/>
            <person name="Davis M.J."/>
            <person name="Wilming L.G."/>
            <person name="Aidinis V."/>
            <person name="Allen J.E."/>
            <person name="Ambesi-Impiombato A."/>
            <person name="Apweiler R."/>
            <person name="Aturaliya R.N."/>
            <person name="Bailey T.L."/>
            <person name="Bansal M."/>
            <person name="Baxter L."/>
            <person name="Beisel K.W."/>
            <person name="Bersano T."/>
            <person name="Bono H."/>
            <person name="Chalk A.M."/>
            <person name="Chiu K.P."/>
            <person name="Choudhary V."/>
            <person name="Christoffels A."/>
            <person name="Clutterbuck D.R."/>
            <person name="Crowe M.L."/>
            <person name="Dalla E."/>
            <person name="Dalrymple B.P."/>
            <person name="de Bono B."/>
            <person name="Della Gatta G."/>
            <person name="di Bernardo D."/>
            <person name="Down T."/>
            <person name="Engstrom P."/>
            <person name="Fagiolini M."/>
            <person name="Faulkner G."/>
            <person name="Fletcher C.F."/>
            <person name="Fukushima T."/>
            <person name="Furuno M."/>
            <person name="Futaki S."/>
            <person name="Gariboldi M."/>
            <person name="Georgii-Hemming P."/>
            <person name="Gingeras T.R."/>
            <person name="Gojobori T."/>
            <person name="Green R.E."/>
            <person name="Gustincich S."/>
            <person name="Harbers M."/>
            <person name="Hayashi Y."/>
            <person name="Hensch T.K."/>
            <person name="Hirokawa N."/>
            <person name="Hill D."/>
            <person name="Huminiecki L."/>
            <person name="Iacono M."/>
            <person name="Ikeo K."/>
            <person name="Iwama A."/>
            <person name="Ishikawa T."/>
            <person name="Jakt M."/>
            <person name="Kanapin A."/>
            <person name="Katoh M."/>
            <person name="Kawasawa Y."/>
            <person name="Kelso J."/>
            <person name="Kitamura H."/>
            <person name="Kitano H."/>
            <person name="Kollias G."/>
            <person name="Krishnan S.P."/>
            <person name="Kruger A."/>
            <person name="Kummerfeld S.K."/>
            <person name="Kurochkin I.V."/>
            <person name="Lareau L.F."/>
            <person name="Lazarevic D."/>
            <person name="Lipovich L."/>
            <person name="Liu J."/>
            <person name="Liuni S."/>
            <person name="McWilliam S."/>
            <person name="Madan Babu M."/>
            <person name="Madera M."/>
            <person name="Marchionni L."/>
            <person name="Matsuda H."/>
            <person name="Matsuzawa S."/>
            <person name="Miki H."/>
            <person name="Mignone F."/>
            <person name="Miyake S."/>
            <person name="Morris K."/>
            <person name="Mottagui-Tabar S."/>
            <person name="Mulder N."/>
            <person name="Nakano N."/>
            <person name="Nakauchi H."/>
            <person name="Ng P."/>
            <person name="Nilsson R."/>
            <person name="Nishiguchi S."/>
            <person name="Nishikawa S."/>
            <person name="Nori F."/>
            <person name="Ohara O."/>
            <person name="Okazaki Y."/>
            <person name="Orlando V."/>
            <person name="Pang K.C."/>
            <person name="Pavan W.J."/>
            <person name="Pavesi G."/>
            <person name="Pesole G."/>
            <person name="Petrovsky N."/>
            <person name="Piazza S."/>
            <person name="Reed J."/>
            <person name="Reid J.F."/>
            <person name="Ring B.Z."/>
            <person name="Ringwald M."/>
            <person name="Rost B."/>
            <person name="Ruan Y."/>
            <person name="Salzberg S.L."/>
            <person name="Sandelin A."/>
            <person name="Schneider C."/>
            <person name="Schoenbach C."/>
            <person name="Sekiguchi K."/>
            <person name="Semple C.A."/>
            <person name="Seno S."/>
            <person name="Sessa L."/>
            <person name="Sheng Y."/>
            <person name="Shibata Y."/>
            <person name="Shimada H."/>
            <person name="Shimada K."/>
            <person name="Silva D."/>
            <person name="Sinclair B."/>
            <person name="Sperling S."/>
            <person name="Stupka E."/>
            <person name="Sugiura K."/>
            <person name="Sultana R."/>
            <person name="Takenaka Y."/>
            <person name="Taki K."/>
            <person name="Tammoja K."/>
            <person name="Tan S.L."/>
            <person name="Tang S."/>
            <person name="Taylor M.S."/>
            <person name="Tegner J."/>
            <person name="Teichmann S.A."/>
            <person name="Ueda H.R."/>
            <person name="van Nimwegen E."/>
            <person name="Verardo R."/>
            <person name="Wei C.L."/>
            <person name="Yagi K."/>
            <person name="Yamanishi H."/>
            <person name="Zabarovsky E."/>
            <person name="Zhu S."/>
            <person name="Zimmer A."/>
            <person name="Hide W."/>
            <person name="Bult C."/>
            <person name="Grimmond S.M."/>
            <person name="Teasdale R.D."/>
            <person name="Liu E.T."/>
            <person name="Brusic V."/>
            <person name="Quackenbush J."/>
            <person name="Wahlestedt C."/>
            <person name="Mattick J.S."/>
            <person name="Hume D.A."/>
            <person name="Kai C."/>
            <person name="Sasaki D."/>
            <person name="Tomaru Y."/>
            <person name="Fukuda S."/>
            <person name="Kanamori-Katayama M."/>
            <person name="Suzuki M."/>
            <person name="Aoki J."/>
            <person name="Arakawa T."/>
            <person name="Iida J."/>
            <person name="Imamura K."/>
            <person name="Itoh M."/>
            <person name="Kato T."/>
            <person name="Kawaji H."/>
            <person name="Kawagashira N."/>
            <person name="Kawashima T."/>
            <person name="Kojima M."/>
            <person name="Kondo S."/>
            <person name="Konno H."/>
            <person name="Nakano K."/>
            <person name="Ninomiya N."/>
            <person name="Nishio T."/>
            <person name="Okada M."/>
            <person name="Plessy C."/>
            <person name="Shibata K."/>
            <person name="Shiraki T."/>
            <person name="Suzuki S."/>
            <person name="Tagami M."/>
            <person name="Waki K."/>
            <person name="Watahiki A."/>
            <person name="Okamura-Oho Y."/>
            <person name="Suzuki H."/>
            <person name="Kawai J."/>
            <person name="Hayashizaki Y."/>
        </authorList>
    </citation>
    <scope>NUCLEOTIDE SEQUENCE [LARGE SCALE MRNA]</scope>
    <source>
        <strain>C57BL/6J</strain>
        <tissue>Inner ear</tissue>
    </source>
</reference>
<reference key="4">
    <citation type="journal article" date="2004" name="Genome Res.">
        <title>The status, quality, and expansion of the NIH full-length cDNA project: the Mammalian Gene Collection (MGC).</title>
        <authorList>
            <consortium name="The MGC Project Team"/>
        </authorList>
    </citation>
    <scope>NUCLEOTIDE SEQUENCE [LARGE SCALE MRNA]</scope>
    <source>
        <strain>C57BL/6J</strain>
        <tissue>Eye</tissue>
    </source>
</reference>
<reference key="5">
    <citation type="journal article" date="2004" name="J. Exp. Med.">
        <title>Phosphorylation of histone H2B at DNA double-strand breaks.</title>
        <authorList>
            <person name="Fernandez-Capetillo O."/>
            <person name="Allis C.D."/>
            <person name="Nussenzweig A."/>
        </authorList>
    </citation>
    <scope>PHOSPHORYLATION AT SER-15</scope>
</reference>
<reference key="6">
    <citation type="journal article" date="2005" name="Immunity">
        <title>Histone modifications associated with somatic hypermutation.</title>
        <authorList>
            <person name="Odegard V.H."/>
            <person name="Kim S.T."/>
            <person name="Anderson S.M."/>
            <person name="Shlomchik M.J."/>
            <person name="Schatz D.G."/>
        </authorList>
    </citation>
    <scope>PHOSPHORYLATION AT SER-15</scope>
</reference>
<reference key="7">
    <citation type="journal article" date="2010" name="Science">
        <title>Signaling kinase AMPK activates stress-promoted transcription via histone H2B phosphorylation.</title>
        <authorList>
            <person name="Bungard D."/>
            <person name="Fuerth B.J."/>
            <person name="Zeng P.Y."/>
            <person name="Faubert B."/>
            <person name="Maas N.L."/>
            <person name="Viollet B."/>
            <person name="Carling D."/>
            <person name="Thompson C.B."/>
            <person name="Jones R.G."/>
            <person name="Berger S.L."/>
        </authorList>
    </citation>
    <scope>PHOSPHORYLATION AT SER-37</scope>
</reference>
<reference key="8">
    <citation type="journal article" date="2011" name="Cell">
        <title>Identification of 67 histone marks and histone lysine crotonylation as a new type of histone modification.</title>
        <authorList>
            <person name="Tan M."/>
            <person name="Luo H."/>
            <person name="Lee S."/>
            <person name="Jin F."/>
            <person name="Yang J.S."/>
            <person name="Montellier E."/>
            <person name="Buchou T."/>
            <person name="Cheng Z."/>
            <person name="Rousseaux S."/>
            <person name="Rajagopal N."/>
            <person name="Lu Z."/>
            <person name="Ye Z."/>
            <person name="Zhu Q."/>
            <person name="Wysocka J."/>
            <person name="Ye Y."/>
            <person name="Khochbin S."/>
            <person name="Ren B."/>
            <person name="Zhao Y."/>
        </authorList>
    </citation>
    <scope>CROTONYLATION AT LYS-6; LYS-12; LYS-13; LYS-16; LYS-17; LYS-21; LYS-24 AND LYS-35</scope>
</reference>
<reference key="9">
    <citation type="journal article" date="2012" name="Mol. Cell. Proteomics">
        <title>Lysine succinylation and lysine malonylation in histones.</title>
        <authorList>
            <person name="Xie Z."/>
            <person name="Dai J."/>
            <person name="Dai L."/>
            <person name="Tan M."/>
            <person name="Cheng Z."/>
            <person name="Wu Y."/>
            <person name="Boeke J.D."/>
            <person name="Zhao Y."/>
        </authorList>
    </citation>
    <scope>SUCCINYLATION AT LYS-121</scope>
</reference>
<reference key="10">
    <citation type="journal article" date="2014" name="Nat. Chem. Biol.">
        <title>Lysine 2-hydroxyisobutyrylation is a widely distributed active histone mark.</title>
        <authorList>
            <person name="Dai L."/>
            <person name="Peng C."/>
            <person name="Montellier E."/>
            <person name="Lu Z."/>
            <person name="Chen Y."/>
            <person name="Ishii H."/>
            <person name="Debernardi A."/>
            <person name="Buchou T."/>
            <person name="Rousseaux S."/>
            <person name="Jin F."/>
            <person name="Sabari B.R."/>
            <person name="Deng Z."/>
            <person name="Allis C.D."/>
            <person name="Ren B."/>
            <person name="Khochbin S."/>
            <person name="Zhao Y."/>
        </authorList>
    </citation>
    <scope>HYDROXYBUTYRYLATION AT LYS-6; LYS-13; LYS-21; LYS-24; LYS-25; LYS-35; LYS-44; LYS-47; LYS-58; LYS-86; LYS-109; LYS-117 AND LYS-121</scope>
</reference>
<reference key="11">
    <citation type="journal article" date="2016" name="Mol. Cell">
        <title>Metabolic regulation of gene expression by histone lysine beta-hydroxybutyrylation.</title>
        <authorList>
            <person name="Xie Z."/>
            <person name="Zhang D."/>
            <person name="Chung D."/>
            <person name="Tang Z."/>
            <person name="Huang H."/>
            <person name="Dai L."/>
            <person name="Qi S."/>
            <person name="Li J."/>
            <person name="Colak G."/>
            <person name="Chen Y."/>
            <person name="Xia C."/>
            <person name="Peng C."/>
            <person name="Ruan H."/>
            <person name="Kirkey M."/>
            <person name="Wang D."/>
            <person name="Jensen L.M."/>
            <person name="Kwon O.K."/>
            <person name="Lee S."/>
            <person name="Pletcher S.D."/>
            <person name="Tan M."/>
            <person name="Lombard D.B."/>
            <person name="White K.P."/>
            <person name="Zhao H."/>
            <person name="Li J."/>
            <person name="Roeder R.G."/>
            <person name="Yang X."/>
            <person name="Zhao Y."/>
        </authorList>
    </citation>
    <scope>HYDROXYBUTYRYLATION AT LYS-6; LYS-12; LYS-21; LYS-35; LYS-109 AND LYS-117</scope>
</reference>
<reference key="12">
    <citation type="journal article" date="2019" name="Nature">
        <title>Metabolic regulation of gene expression by histone lactylation.</title>
        <authorList>
            <person name="Zhang D."/>
            <person name="Tang Z."/>
            <person name="Huang H."/>
            <person name="Zhou G."/>
            <person name="Cui C."/>
            <person name="Weng Y."/>
            <person name="Liu W."/>
            <person name="Kim S."/>
            <person name="Lee S."/>
            <person name="Perez-Neut M."/>
            <person name="Ding J."/>
            <person name="Czyz D."/>
            <person name="Hu R."/>
            <person name="Ye Z."/>
            <person name="He M."/>
            <person name="Zheng Y.G."/>
            <person name="Shuman H.A."/>
            <person name="Dai L."/>
            <person name="Ren B."/>
            <person name="Roeder R.G."/>
            <person name="Becker L."/>
            <person name="Zhao Y."/>
        </authorList>
    </citation>
    <scope>LACTYLATION AT LYS-6; LYS-12; LYS-16; LYS-17; LYS-21; LYS-86; LYS-109 AND LYS-117</scope>
</reference>
<reference key="13">
    <citation type="journal article" date="2020" name="Mol. Cell">
        <title>Functional interplay between histone H2B ADP-ribosylation and phosphorylation controls adipogenesis.</title>
        <authorList>
            <person name="Huang D."/>
            <person name="Camacho C.V."/>
            <person name="Setlem R."/>
            <person name="Ryu K.W."/>
            <person name="Parameswaran B."/>
            <person name="Gupta R.K."/>
            <person name="Kraus W.L."/>
        </authorList>
    </citation>
    <scope>ADP-RIBOSYLATION AT GLU-36</scope>
    <scope>PHOSPHORYLATION AT SER-37</scope>
</reference>
<evidence type="ECO:0000250" key="1">
    <source>
        <dbReference type="UniProtKB" id="P23527"/>
    </source>
</evidence>
<evidence type="ECO:0000250" key="2">
    <source>
        <dbReference type="UniProtKB" id="P33778"/>
    </source>
</evidence>
<evidence type="ECO:0000250" key="3">
    <source>
        <dbReference type="UniProtKB" id="P58876"/>
    </source>
</evidence>
<evidence type="ECO:0000250" key="4">
    <source>
        <dbReference type="UniProtKB" id="P62807"/>
    </source>
</evidence>
<evidence type="ECO:0000250" key="5">
    <source>
        <dbReference type="UniProtKB" id="Q00729"/>
    </source>
</evidence>
<evidence type="ECO:0000250" key="6">
    <source>
        <dbReference type="UniProtKB" id="Q5QNW6"/>
    </source>
</evidence>
<evidence type="ECO:0000250" key="7">
    <source>
        <dbReference type="UniProtKB" id="Q93079"/>
    </source>
</evidence>
<evidence type="ECO:0000250" key="8">
    <source>
        <dbReference type="UniProtKB" id="Q96A08"/>
    </source>
</evidence>
<evidence type="ECO:0000256" key="9">
    <source>
        <dbReference type="SAM" id="MobiDB-lite"/>
    </source>
</evidence>
<evidence type="ECO:0000269" key="10">
    <source>
    </source>
</evidence>
<evidence type="ECO:0000269" key="11">
    <source>
    </source>
</evidence>
<evidence type="ECO:0000269" key="12">
    <source>
    </source>
</evidence>
<evidence type="ECO:0000269" key="13">
    <source>
    </source>
</evidence>
<evidence type="ECO:0000269" key="14">
    <source>
    </source>
</evidence>
<evidence type="ECO:0000269" key="15">
    <source>
    </source>
</evidence>
<evidence type="ECO:0000269" key="16">
    <source>
    </source>
</evidence>
<evidence type="ECO:0000269" key="17">
    <source>
    </source>
</evidence>
<evidence type="ECO:0000269" key="18">
    <source>
    </source>
</evidence>
<evidence type="ECO:0000305" key="19"/>
<evidence type="ECO:0000312" key="20">
    <source>
        <dbReference type="MGI" id="MGI:2448387"/>
    </source>
</evidence>
<proteinExistence type="evidence at protein level"/>
<name>H2B1H_MOUSE</name>